<keyword id="KW-0489">Methyltransferase</keyword>
<keyword id="KW-0539">Nucleus</keyword>
<keyword id="KW-1185">Reference proteome</keyword>
<keyword id="KW-0694">RNA-binding</keyword>
<keyword id="KW-0949">S-adenosyl-L-methionine</keyword>
<keyword id="KW-0808">Transferase</keyword>
<keyword id="KW-0819">tRNA processing</keyword>
<keyword id="KW-0820">tRNA-binding</keyword>
<comment type="function">
    <text evidence="3 4">tRNA cytosine C(5)-methyltransferase that methylates cytosine to 5-methylcytosine (m5C) in tRNAs at position 49 and 50 (PubMed:30646830). Trm4a and trm4b methylate different sets of tRNAs (PubMed:30646830). Also methylates cytosine to m5C at positions (60, 61 and 62) in tRNA(Asp) (PubMed:23074192).</text>
</comment>
<comment type="catalytic activity">
    <reaction evidence="6 7">
        <text>cytidine(49) in tRNA precursor + S-adenosyl-L-methionine = 5-methylcytidine(49) in tRNA precursor + S-adenosyl-L-homocysteine + H(+)</text>
        <dbReference type="Rhea" id="RHEA:54140"/>
        <dbReference type="Rhea" id="RHEA-COMP:13804"/>
        <dbReference type="Rhea" id="RHEA-COMP:13805"/>
        <dbReference type="ChEBI" id="CHEBI:15378"/>
        <dbReference type="ChEBI" id="CHEBI:57856"/>
        <dbReference type="ChEBI" id="CHEBI:59789"/>
        <dbReference type="ChEBI" id="CHEBI:74483"/>
        <dbReference type="ChEBI" id="CHEBI:82748"/>
    </reaction>
    <physiologicalReaction direction="left-to-right" evidence="3 7">
        <dbReference type="Rhea" id="RHEA:54141"/>
    </physiologicalReaction>
</comment>
<comment type="catalytic activity">
    <reaction evidence="7">
        <text>cytidine(50) in tRNA + S-adenosyl-L-methionine = 5-methylcytidine(50) in tRNA + S-adenosyl-L-homocysteine + H(+)</text>
        <dbReference type="Rhea" id="RHEA:61488"/>
        <dbReference type="Rhea" id="RHEA-COMP:15838"/>
        <dbReference type="Rhea" id="RHEA-COMP:15839"/>
        <dbReference type="ChEBI" id="CHEBI:15378"/>
        <dbReference type="ChEBI" id="CHEBI:57856"/>
        <dbReference type="ChEBI" id="CHEBI:59789"/>
        <dbReference type="ChEBI" id="CHEBI:74483"/>
        <dbReference type="ChEBI" id="CHEBI:82748"/>
    </reaction>
    <physiologicalReaction direction="left-to-right" evidence="7">
        <dbReference type="Rhea" id="RHEA:61489"/>
    </physiologicalReaction>
</comment>
<comment type="catalytic activity">
    <reaction evidence="6">
        <text>cytidine(60) in tRNA(Asp) + S-adenosyl-L-methionine = 5-methylcytidine(60) in tRNA(Asp) + S-adenosyl-L-homocysteine + H(+)</text>
        <dbReference type="Rhea" id="RHEA:51160"/>
        <dbReference type="Rhea" id="RHEA-COMP:12902"/>
        <dbReference type="Rhea" id="RHEA-COMP:12905"/>
        <dbReference type="ChEBI" id="CHEBI:15378"/>
        <dbReference type="ChEBI" id="CHEBI:57856"/>
        <dbReference type="ChEBI" id="CHEBI:59789"/>
        <dbReference type="ChEBI" id="CHEBI:74483"/>
        <dbReference type="ChEBI" id="CHEBI:82748"/>
    </reaction>
    <physiologicalReaction direction="left-to-right" evidence="3">
        <dbReference type="Rhea" id="RHEA:51161"/>
    </physiologicalReaction>
</comment>
<comment type="catalytic activity">
    <reaction evidence="6">
        <text>cytidine(61) in tRNA(Asp) + S-adenosyl-L-methionine = 5-methylcytidine(61) in tRNA(Asp) + S-adenosyl-L-homocysteine + H(+)</text>
        <dbReference type="Rhea" id="RHEA:51164"/>
        <dbReference type="Rhea" id="RHEA-COMP:12903"/>
        <dbReference type="Rhea" id="RHEA-COMP:12906"/>
        <dbReference type="ChEBI" id="CHEBI:15378"/>
        <dbReference type="ChEBI" id="CHEBI:57856"/>
        <dbReference type="ChEBI" id="CHEBI:59789"/>
        <dbReference type="ChEBI" id="CHEBI:74483"/>
        <dbReference type="ChEBI" id="CHEBI:82748"/>
    </reaction>
    <physiologicalReaction direction="left-to-right" evidence="3">
        <dbReference type="Rhea" id="RHEA:51165"/>
    </physiologicalReaction>
</comment>
<comment type="catalytic activity">
    <reaction evidence="6">
        <text>cytidine(62) in tRNA(Asp) + S-adenosyl-L-methionine = 5-methylcytidine(62) in tRNA(Asp) + S-adenosyl-L-homocysteine + H(+)</text>
        <dbReference type="Rhea" id="RHEA:51172"/>
        <dbReference type="Rhea" id="RHEA-COMP:12904"/>
        <dbReference type="Rhea" id="RHEA-COMP:12907"/>
        <dbReference type="ChEBI" id="CHEBI:15378"/>
        <dbReference type="ChEBI" id="CHEBI:57856"/>
        <dbReference type="ChEBI" id="CHEBI:59789"/>
        <dbReference type="ChEBI" id="CHEBI:74483"/>
        <dbReference type="ChEBI" id="CHEBI:82748"/>
    </reaction>
    <physiologicalReaction direction="left-to-right" evidence="3">
        <dbReference type="Rhea" id="RHEA:51173"/>
    </physiologicalReaction>
</comment>
<comment type="subcellular location">
    <subcellularLocation>
        <location evidence="2">Nucleus</location>
    </subcellularLocation>
</comment>
<comment type="disruption phenotype">
    <text evidence="4">Cells lacking both trm4a and trm4b show a mild resistance to calcium chloride.</text>
</comment>
<comment type="similarity">
    <text evidence="1">Belongs to the class I-like SAM-binding methyltransferase superfamily. RsmB/NOP family. TRM4 subfamily.</text>
</comment>
<accession>O13935</accession>
<feature type="chain" id="PRO_0000317151" description="Multisite-specific tRNA:(cytosine-C(5))-methyltransferase trm4b">
    <location>
        <begin position="1"/>
        <end position="685"/>
    </location>
</feature>
<feature type="active site" description="Nucleophile" evidence="1">
    <location>
        <position position="323"/>
    </location>
</feature>
<feature type="binding site" evidence="1">
    <location>
        <begin position="167"/>
        <end position="173"/>
    </location>
    <ligand>
        <name>S-adenosyl-L-methionine</name>
        <dbReference type="ChEBI" id="CHEBI:59789"/>
    </ligand>
</feature>
<feature type="binding site" evidence="1">
    <location>
        <position position="208"/>
    </location>
    <ligand>
        <name>S-adenosyl-L-methionine</name>
        <dbReference type="ChEBI" id="CHEBI:59789"/>
    </ligand>
</feature>
<feature type="binding site" evidence="1">
    <location>
        <position position="235"/>
    </location>
    <ligand>
        <name>S-adenosyl-L-methionine</name>
        <dbReference type="ChEBI" id="CHEBI:59789"/>
    </ligand>
</feature>
<feature type="binding site" evidence="1">
    <location>
        <position position="270"/>
    </location>
    <ligand>
        <name>S-adenosyl-L-methionine</name>
        <dbReference type="ChEBI" id="CHEBI:59789"/>
    </ligand>
</feature>
<sequence>MGKRNKKVTQGKRAYNDKSEIVLENKQFEGYYKKQNLFRGKPNDEFDSFMEYMRKPLPTTFRICGYRHHAFELKNHFEKYYVPSLKNVVHEGQTIPPPTVLPWYPDGLAYIVDAQKDVIRKSPPLKRLQRFLVSENEAGNINRQEAVSMLPPLFLDVEPHHVILDMCAAPGSKTAQLIEAVYKKANIKDAAHDSKNLKSVEGLVIANDADPKRAQMLVHQINRLNSPNILVVNHDASTMPNIYVKGSSPSDGLNVIEEKKILKFDRILADVPCSGDGTFRKNLSLWREWSANSAFSLHPLQLRILIRGLQLLKVGGCLVYSTCSINPIENEAVVTAALKATGGAVSLVDVSKKLPLLKRDPGLLSWKVLDDSLNEFQSPAENTNDKIELTESMWPLPEEEMSKLHIERCARLYPHMQNTGGFFVAVLQKTDPINSRSFDPKKYTASMEILPPENKRQRTEKGVDEASNSTLTKSGNSYFDEEPFVYINPDDTSIKTIVDFYGIDPSFPRDQFFVRNQSGIPVRSIYFACSLFKEIIEANTNRVKFVHGGVRFFVKQEISQLLKDFSLKANKDICNFRIHSNGVNIISPFLNEKHFYDAGLKDLKILVKNEYPHVEQFSESGMLKKEFEKMPLGCNILRVDAQTKDGALMDMLILQPIWRSPTSCNLMLARKEKQNLSLELFGMDV</sequence>
<reference key="1">
    <citation type="journal article" date="2002" name="Nature">
        <title>The genome sequence of Schizosaccharomyces pombe.</title>
        <authorList>
            <person name="Wood V."/>
            <person name="Gwilliam R."/>
            <person name="Rajandream M.A."/>
            <person name="Lyne M.H."/>
            <person name="Lyne R."/>
            <person name="Stewart A."/>
            <person name="Sgouros J.G."/>
            <person name="Peat N."/>
            <person name="Hayles J."/>
            <person name="Baker S.G."/>
            <person name="Basham D."/>
            <person name="Bowman S."/>
            <person name="Brooks K."/>
            <person name="Brown D."/>
            <person name="Brown S."/>
            <person name="Chillingworth T."/>
            <person name="Churcher C.M."/>
            <person name="Collins M."/>
            <person name="Connor R."/>
            <person name="Cronin A."/>
            <person name="Davis P."/>
            <person name="Feltwell T."/>
            <person name="Fraser A."/>
            <person name="Gentles S."/>
            <person name="Goble A."/>
            <person name="Hamlin N."/>
            <person name="Harris D.E."/>
            <person name="Hidalgo J."/>
            <person name="Hodgson G."/>
            <person name="Holroyd S."/>
            <person name="Hornsby T."/>
            <person name="Howarth S."/>
            <person name="Huckle E.J."/>
            <person name="Hunt S."/>
            <person name="Jagels K."/>
            <person name="James K.D."/>
            <person name="Jones L."/>
            <person name="Jones M."/>
            <person name="Leather S."/>
            <person name="McDonald S."/>
            <person name="McLean J."/>
            <person name="Mooney P."/>
            <person name="Moule S."/>
            <person name="Mungall K.L."/>
            <person name="Murphy L.D."/>
            <person name="Niblett D."/>
            <person name="Odell C."/>
            <person name="Oliver K."/>
            <person name="O'Neil S."/>
            <person name="Pearson D."/>
            <person name="Quail M.A."/>
            <person name="Rabbinowitsch E."/>
            <person name="Rutherford K.M."/>
            <person name="Rutter S."/>
            <person name="Saunders D."/>
            <person name="Seeger K."/>
            <person name="Sharp S."/>
            <person name="Skelton J."/>
            <person name="Simmonds M.N."/>
            <person name="Squares R."/>
            <person name="Squares S."/>
            <person name="Stevens K."/>
            <person name="Taylor K."/>
            <person name="Taylor R.G."/>
            <person name="Tivey A."/>
            <person name="Walsh S.V."/>
            <person name="Warren T."/>
            <person name="Whitehead S."/>
            <person name="Woodward J.R."/>
            <person name="Volckaert G."/>
            <person name="Aert R."/>
            <person name="Robben J."/>
            <person name="Grymonprez B."/>
            <person name="Weltjens I."/>
            <person name="Vanstreels E."/>
            <person name="Rieger M."/>
            <person name="Schaefer M."/>
            <person name="Mueller-Auer S."/>
            <person name="Gabel C."/>
            <person name="Fuchs M."/>
            <person name="Duesterhoeft A."/>
            <person name="Fritzc C."/>
            <person name="Holzer E."/>
            <person name="Moestl D."/>
            <person name="Hilbert H."/>
            <person name="Borzym K."/>
            <person name="Langer I."/>
            <person name="Beck A."/>
            <person name="Lehrach H."/>
            <person name="Reinhardt R."/>
            <person name="Pohl T.M."/>
            <person name="Eger P."/>
            <person name="Zimmermann W."/>
            <person name="Wedler H."/>
            <person name="Wambutt R."/>
            <person name="Purnelle B."/>
            <person name="Goffeau A."/>
            <person name="Cadieu E."/>
            <person name="Dreano S."/>
            <person name="Gloux S."/>
            <person name="Lelaure V."/>
            <person name="Mottier S."/>
            <person name="Galibert F."/>
            <person name="Aves S.J."/>
            <person name="Xiang Z."/>
            <person name="Hunt C."/>
            <person name="Moore K."/>
            <person name="Hurst S.M."/>
            <person name="Lucas M."/>
            <person name="Rochet M."/>
            <person name="Gaillardin C."/>
            <person name="Tallada V.A."/>
            <person name="Garzon A."/>
            <person name="Thode G."/>
            <person name="Daga R.R."/>
            <person name="Cruzado L."/>
            <person name="Jimenez J."/>
            <person name="Sanchez M."/>
            <person name="del Rey F."/>
            <person name="Benito J."/>
            <person name="Dominguez A."/>
            <person name="Revuelta J.L."/>
            <person name="Moreno S."/>
            <person name="Armstrong J."/>
            <person name="Forsburg S.L."/>
            <person name="Cerutti L."/>
            <person name="Lowe T."/>
            <person name="McCombie W.R."/>
            <person name="Paulsen I."/>
            <person name="Potashkin J."/>
            <person name="Shpakovski G.V."/>
            <person name="Ussery D."/>
            <person name="Barrell B.G."/>
            <person name="Nurse P."/>
        </authorList>
    </citation>
    <scope>NUCLEOTIDE SEQUENCE [LARGE SCALE GENOMIC DNA]</scope>
    <source>
        <strain>972 / ATCC 24843</strain>
    </source>
</reference>
<reference key="2">
    <citation type="journal article" date="2011" name="Science">
        <title>Comparative functional genomics of the fission yeasts.</title>
        <authorList>
            <person name="Rhind N."/>
            <person name="Chen Z."/>
            <person name="Yassour M."/>
            <person name="Thompson D.A."/>
            <person name="Haas B.J."/>
            <person name="Habib N."/>
            <person name="Wapinski I."/>
            <person name="Roy S."/>
            <person name="Lin M.F."/>
            <person name="Heiman D.I."/>
            <person name="Young S.K."/>
            <person name="Furuya K."/>
            <person name="Guo Y."/>
            <person name="Pidoux A."/>
            <person name="Chen H.M."/>
            <person name="Robbertse B."/>
            <person name="Goldberg J.M."/>
            <person name="Aoki K."/>
            <person name="Bayne E.H."/>
            <person name="Berlin A.M."/>
            <person name="Desjardins C.A."/>
            <person name="Dobbs E."/>
            <person name="Dukaj L."/>
            <person name="Fan L."/>
            <person name="FitzGerald M.G."/>
            <person name="French C."/>
            <person name="Gujja S."/>
            <person name="Hansen K."/>
            <person name="Keifenheim D."/>
            <person name="Levin J.Z."/>
            <person name="Mosher R.A."/>
            <person name="Mueller C.A."/>
            <person name="Pfiffner J."/>
            <person name="Priest M."/>
            <person name="Russ C."/>
            <person name="Smialowska A."/>
            <person name="Swoboda P."/>
            <person name="Sykes S.M."/>
            <person name="Vaughn M."/>
            <person name="Vengrova S."/>
            <person name="Yoder R."/>
            <person name="Zeng Q."/>
            <person name="Allshire R."/>
            <person name="Baulcombe D."/>
            <person name="Birren B.W."/>
            <person name="Brown W."/>
            <person name="Ekwall K."/>
            <person name="Kellis M."/>
            <person name="Leatherwood J."/>
            <person name="Levin H."/>
            <person name="Margalit H."/>
            <person name="Martienssen R."/>
            <person name="Nieduszynski C.A."/>
            <person name="Spatafora J.W."/>
            <person name="Friedman N."/>
            <person name="Dalgaard J.Z."/>
            <person name="Baumann P."/>
            <person name="Niki H."/>
            <person name="Regev A."/>
            <person name="Nusbaum C."/>
        </authorList>
    </citation>
    <scope>REVISION OF GENE MODEL</scope>
</reference>
<reference key="3">
    <citation type="journal article" date="2006" name="Nat. Biotechnol.">
        <title>ORFeome cloning and global analysis of protein localization in the fission yeast Schizosaccharomyces pombe.</title>
        <authorList>
            <person name="Matsuyama A."/>
            <person name="Arai R."/>
            <person name="Yashiroda Y."/>
            <person name="Shirai A."/>
            <person name="Kamata A."/>
            <person name="Sekido S."/>
            <person name="Kobayashi Y."/>
            <person name="Hashimoto A."/>
            <person name="Hamamoto M."/>
            <person name="Hiraoka Y."/>
            <person name="Horinouchi S."/>
            <person name="Yoshida M."/>
        </authorList>
    </citation>
    <scope>SUBCELLULAR LOCATION [LARGE SCALE ANALYSIS]</scope>
</reference>
<reference key="4">
    <citation type="journal article" date="2012" name="Nucleic Acids Res.">
        <title>Pmt1, a Dnmt2 homolog in Schizosaccharomyces pombe, mediates tRNA methylation in response to nutrient signaling.</title>
        <authorList>
            <person name="Becker M."/>
            <person name="Muller S."/>
            <person name="Nellen W."/>
            <person name="Jurkowski T.P."/>
            <person name="Jeltsch A."/>
            <person name="Ehrenhofer-Murray A.E."/>
        </authorList>
    </citation>
    <scope>FUNCTION</scope>
</reference>
<reference key="5">
    <citation type="journal article" date="2019" name="RNA Biol.">
        <title>Division of labour: tRNA methylation by the NSun2 tRNA methyltransferases Trm4a and Trm4b in fission yeast.</title>
        <authorList>
            <person name="Mueller M."/>
            <person name="Samel-Pommerencke A."/>
            <person name="Legrand C."/>
            <person name="Tuorto F."/>
            <person name="Lyko F."/>
            <person name="Ehrenhofer-Murray A.E."/>
        </authorList>
    </citation>
    <scope>FUNCTION</scope>
    <scope>CATALYTIC ACTIVITY</scope>
    <scope>DISRUPTION PHENOTYPE</scope>
</reference>
<organism>
    <name type="scientific">Schizosaccharomyces pombe (strain 972 / ATCC 24843)</name>
    <name type="common">Fission yeast</name>
    <dbReference type="NCBI Taxonomy" id="284812"/>
    <lineage>
        <taxon>Eukaryota</taxon>
        <taxon>Fungi</taxon>
        <taxon>Dikarya</taxon>
        <taxon>Ascomycota</taxon>
        <taxon>Taphrinomycotina</taxon>
        <taxon>Schizosaccharomycetes</taxon>
        <taxon>Schizosaccharomycetales</taxon>
        <taxon>Schizosaccharomycetaceae</taxon>
        <taxon>Schizosaccharomyces</taxon>
    </lineage>
</organism>
<dbReference type="EC" id="2.1.1.-" evidence="6 7"/>
<dbReference type="EMBL" id="CU329670">
    <property type="protein sequence ID" value="CAB16888.2"/>
    <property type="molecule type" value="Genomic_DNA"/>
</dbReference>
<dbReference type="PIR" id="T38272">
    <property type="entry name" value="T38272"/>
</dbReference>
<dbReference type="RefSeq" id="NP_593189.2">
    <property type="nucleotide sequence ID" value="NM_001018585.2"/>
</dbReference>
<dbReference type="SMR" id="O13935"/>
<dbReference type="BioGRID" id="278407">
    <property type="interactions" value="2"/>
</dbReference>
<dbReference type="FunCoup" id="O13935">
    <property type="interactions" value="1091"/>
</dbReference>
<dbReference type="STRING" id="284812.O13935"/>
<dbReference type="iPTMnet" id="O13935"/>
<dbReference type="PaxDb" id="4896-SPAC23C4.17.1"/>
<dbReference type="EnsemblFungi" id="SPAC23C4.17.1">
    <property type="protein sequence ID" value="SPAC23C4.17.1:pep"/>
    <property type="gene ID" value="SPAC23C4.17"/>
</dbReference>
<dbReference type="GeneID" id="2541917"/>
<dbReference type="KEGG" id="spo:2541917"/>
<dbReference type="PomBase" id="SPAC23C4.17"/>
<dbReference type="VEuPathDB" id="FungiDB:SPAC23C4.17"/>
<dbReference type="eggNOG" id="KOG2198">
    <property type="taxonomic scope" value="Eukaryota"/>
</dbReference>
<dbReference type="HOGENOM" id="CLU_005316_4_3_1"/>
<dbReference type="InParanoid" id="O13935"/>
<dbReference type="OMA" id="TQRKHFQ"/>
<dbReference type="BRENDA" id="2.1.1.202">
    <property type="organism ID" value="5613"/>
</dbReference>
<dbReference type="PRO" id="PR:O13935"/>
<dbReference type="Proteomes" id="UP000002485">
    <property type="component" value="Chromosome I"/>
</dbReference>
<dbReference type="GO" id="GO:0005737">
    <property type="term" value="C:cytoplasm"/>
    <property type="evidence" value="ECO:0000318"/>
    <property type="project" value="GO_Central"/>
</dbReference>
<dbReference type="GO" id="GO:0005634">
    <property type="term" value="C:nucleus"/>
    <property type="evidence" value="ECO:0007005"/>
    <property type="project" value="PomBase"/>
</dbReference>
<dbReference type="GO" id="GO:0062152">
    <property type="term" value="F:mRNA (cytidine-5-)-methyltransferase activity"/>
    <property type="evidence" value="ECO:0000250"/>
    <property type="project" value="PomBase"/>
</dbReference>
<dbReference type="GO" id="GO:0016428">
    <property type="term" value="F:tRNA (cytidine-5-)-methyltransferase activity"/>
    <property type="evidence" value="ECO:0000314"/>
    <property type="project" value="PomBase"/>
</dbReference>
<dbReference type="GO" id="GO:0000049">
    <property type="term" value="F:tRNA binding"/>
    <property type="evidence" value="ECO:0000318"/>
    <property type="project" value="GO_Central"/>
</dbReference>
<dbReference type="GO" id="GO:0030488">
    <property type="term" value="P:tRNA methylation"/>
    <property type="evidence" value="ECO:0000315"/>
    <property type="project" value="UniProtKB"/>
</dbReference>
<dbReference type="GO" id="GO:0002127">
    <property type="term" value="P:tRNA wobble base cytosine methylation"/>
    <property type="evidence" value="ECO:0000266"/>
    <property type="project" value="PomBase"/>
</dbReference>
<dbReference type="CDD" id="cd02440">
    <property type="entry name" value="AdoMet_MTases"/>
    <property type="match status" value="1"/>
</dbReference>
<dbReference type="Gene3D" id="3.40.50.150">
    <property type="entry name" value="Vaccinia Virus protein VP39"/>
    <property type="match status" value="1"/>
</dbReference>
<dbReference type="InterPro" id="IPR049560">
    <property type="entry name" value="MeTrfase_RsmB-F_NOP2_cat"/>
</dbReference>
<dbReference type="InterPro" id="IPR001678">
    <property type="entry name" value="MeTrfase_RsmB-F_NOP2_dom"/>
</dbReference>
<dbReference type="InterPro" id="IPR023267">
    <property type="entry name" value="RCMT"/>
</dbReference>
<dbReference type="InterPro" id="IPR023270">
    <property type="entry name" value="RCMT_NCL1"/>
</dbReference>
<dbReference type="InterPro" id="IPR018314">
    <property type="entry name" value="RsmB/NOL1/NOP2-like_CS"/>
</dbReference>
<dbReference type="InterPro" id="IPR029063">
    <property type="entry name" value="SAM-dependent_MTases_sf"/>
</dbReference>
<dbReference type="PANTHER" id="PTHR22808">
    <property type="entry name" value="NCL1 YEAST -RELATED NOL1/NOP2/FMU SUN DOMAIN-CONTAINING"/>
    <property type="match status" value="1"/>
</dbReference>
<dbReference type="PANTHER" id="PTHR22808:SF1">
    <property type="entry name" value="RNA CYTOSINE-C(5)-METHYLTRANSFERASE NSUN2-RELATED"/>
    <property type="match status" value="1"/>
</dbReference>
<dbReference type="Pfam" id="PF01189">
    <property type="entry name" value="Methyltr_RsmB-F"/>
    <property type="match status" value="1"/>
</dbReference>
<dbReference type="Pfam" id="PF25376">
    <property type="entry name" value="Pre-PUA_NSUN2"/>
    <property type="match status" value="1"/>
</dbReference>
<dbReference type="Pfam" id="PF25378">
    <property type="entry name" value="PUA_NSUN2"/>
    <property type="match status" value="1"/>
</dbReference>
<dbReference type="PRINTS" id="PR02008">
    <property type="entry name" value="RCMTFAMILY"/>
</dbReference>
<dbReference type="PRINTS" id="PR02011">
    <property type="entry name" value="RCMTNCL1"/>
</dbReference>
<dbReference type="SUPFAM" id="SSF53335">
    <property type="entry name" value="S-adenosyl-L-methionine-dependent methyltransferases"/>
    <property type="match status" value="1"/>
</dbReference>
<dbReference type="PROSITE" id="PS01153">
    <property type="entry name" value="NOL1_NOP2_SUN"/>
    <property type="match status" value="1"/>
</dbReference>
<dbReference type="PROSITE" id="PS51686">
    <property type="entry name" value="SAM_MT_RSMB_NOP"/>
    <property type="match status" value="1"/>
</dbReference>
<gene>
    <name evidence="5 8" type="primary">trm4b</name>
    <name type="ORF">SPAC23C4.17</name>
</gene>
<name>TRM4B_SCHPO</name>
<evidence type="ECO:0000255" key="1">
    <source>
        <dbReference type="PROSITE-ProRule" id="PRU01023"/>
    </source>
</evidence>
<evidence type="ECO:0000269" key="2">
    <source>
    </source>
</evidence>
<evidence type="ECO:0000269" key="3">
    <source>
    </source>
</evidence>
<evidence type="ECO:0000269" key="4">
    <source>
    </source>
</evidence>
<evidence type="ECO:0000303" key="5">
    <source>
    </source>
</evidence>
<evidence type="ECO:0000305" key="6">
    <source>
    </source>
</evidence>
<evidence type="ECO:0000305" key="7">
    <source>
    </source>
</evidence>
<evidence type="ECO:0000312" key="8">
    <source>
        <dbReference type="PomBase" id="SPAC23C4.17"/>
    </source>
</evidence>
<protein>
    <recommendedName>
        <fullName>Multisite-specific tRNA:(cytosine-C(5))-methyltransferase trm4b</fullName>
        <ecNumber evidence="6 7">2.1.1.-</ecNumber>
    </recommendedName>
    <alternativeName>
        <fullName>tRNA (cytosine-5-)-methyltransferase trm4b</fullName>
    </alternativeName>
</protein>
<proteinExistence type="evidence at protein level"/>